<feature type="signal peptide" evidence="1">
    <location>
        <begin position="1"/>
        <end position="22"/>
    </location>
</feature>
<feature type="chain" id="PRO_0000029301" description="Foldase protein PrsA">
    <location>
        <begin position="23"/>
        <end position="342"/>
    </location>
</feature>
<feature type="domain" description="PpiC" evidence="1">
    <location>
        <begin position="189"/>
        <end position="284"/>
    </location>
</feature>
<feature type="lipid moiety-binding region" description="N-palmitoyl cysteine" evidence="1">
    <location>
        <position position="23"/>
    </location>
</feature>
<feature type="lipid moiety-binding region" description="S-diacylglycerol cysteine" evidence="1">
    <location>
        <position position="23"/>
    </location>
</feature>
<evidence type="ECO:0000255" key="1">
    <source>
        <dbReference type="HAMAP-Rule" id="MF_01145"/>
    </source>
</evidence>
<sequence>MVSVKKIVASALVGVLMFSAVGCNMVEKTQAAIDKTTVATVNGEKITLGEVDSHLKGVFAQMKSQYGDKYMDDPQVAQQILQQRQSVVQGLVTDKVLGIEADKLGIKPSEEEIKKKVDEQFENIKKGMGDNFDKALEAEGYTEDTFKDVIKNQVINQAVQDYIIKDVKVTDEDAQKYYDENKQQFVAKDSGVLTKHLLFENEEEAQKAYDEIQSGKTTFNDLFTKYQNNKSENKKPIAENLGVVPAENSGLVQEFVDGLKPLKEGEISKPIKTQFGYHIIQAGATYEKGAQLPFDEVKSQIIQILKQQKDSEKFKADMDQWKKDLNVKVYDDKLQEGLKISK</sequence>
<proteinExistence type="inferred from homology"/>
<dbReference type="EC" id="5.2.1.8" evidence="1"/>
<dbReference type="EMBL" id="BA000016">
    <property type="protein sequence ID" value="BAB82189.1"/>
    <property type="molecule type" value="Genomic_DNA"/>
</dbReference>
<dbReference type="RefSeq" id="WP_011010923.1">
    <property type="nucleotide sequence ID" value="NC_003366.1"/>
</dbReference>
<dbReference type="SMR" id="Q8XHK0"/>
<dbReference type="STRING" id="195102.gene:10491817"/>
<dbReference type="KEGG" id="cpe:CPE2483"/>
<dbReference type="HOGENOM" id="CLU_034646_5_2_9"/>
<dbReference type="Proteomes" id="UP000000818">
    <property type="component" value="Chromosome"/>
</dbReference>
<dbReference type="GO" id="GO:0005886">
    <property type="term" value="C:plasma membrane"/>
    <property type="evidence" value="ECO:0007669"/>
    <property type="project" value="UniProtKB-SubCell"/>
</dbReference>
<dbReference type="GO" id="GO:0003755">
    <property type="term" value="F:peptidyl-prolyl cis-trans isomerase activity"/>
    <property type="evidence" value="ECO:0007669"/>
    <property type="project" value="UniProtKB-UniRule"/>
</dbReference>
<dbReference type="GO" id="GO:0006457">
    <property type="term" value="P:protein folding"/>
    <property type="evidence" value="ECO:0007669"/>
    <property type="project" value="UniProtKB-UniRule"/>
</dbReference>
<dbReference type="Gene3D" id="3.10.50.40">
    <property type="match status" value="1"/>
</dbReference>
<dbReference type="Gene3D" id="1.10.4030.10">
    <property type="entry name" value="Porin chaperone SurA, peptide-binding domain"/>
    <property type="match status" value="2"/>
</dbReference>
<dbReference type="HAMAP" id="MF_01145">
    <property type="entry name" value="Foldase_PrsA"/>
    <property type="match status" value="1"/>
</dbReference>
<dbReference type="InterPro" id="IPR023059">
    <property type="entry name" value="Foldase_PrsA"/>
</dbReference>
<dbReference type="InterPro" id="IPR046357">
    <property type="entry name" value="PPIase_dom_sf"/>
</dbReference>
<dbReference type="InterPro" id="IPR000297">
    <property type="entry name" value="PPIase_PpiC"/>
</dbReference>
<dbReference type="InterPro" id="IPR050245">
    <property type="entry name" value="PrsA_foldase"/>
</dbReference>
<dbReference type="InterPro" id="IPR027304">
    <property type="entry name" value="Trigger_fact/SurA_dom_sf"/>
</dbReference>
<dbReference type="NCBIfam" id="NF000809">
    <property type="entry name" value="PRK00059.1"/>
    <property type="match status" value="1"/>
</dbReference>
<dbReference type="PANTHER" id="PTHR47245:SF1">
    <property type="entry name" value="FOLDASE PROTEIN PRSA"/>
    <property type="match status" value="1"/>
</dbReference>
<dbReference type="PANTHER" id="PTHR47245">
    <property type="entry name" value="PEPTIDYLPROLYL ISOMERASE"/>
    <property type="match status" value="1"/>
</dbReference>
<dbReference type="Pfam" id="PF13145">
    <property type="entry name" value="Rotamase_2"/>
    <property type="match status" value="1"/>
</dbReference>
<dbReference type="Pfam" id="PF13624">
    <property type="entry name" value="SurA_N_3"/>
    <property type="match status" value="1"/>
</dbReference>
<dbReference type="SUPFAM" id="SSF54534">
    <property type="entry name" value="FKBP-like"/>
    <property type="match status" value="1"/>
</dbReference>
<dbReference type="SUPFAM" id="SSF109998">
    <property type="entry name" value="Triger factor/SurA peptide-binding domain-like"/>
    <property type="match status" value="1"/>
</dbReference>
<dbReference type="PROSITE" id="PS50198">
    <property type="entry name" value="PPIC_PPIASE_2"/>
    <property type="match status" value="1"/>
</dbReference>
<dbReference type="PROSITE" id="PS51257">
    <property type="entry name" value="PROKAR_LIPOPROTEIN"/>
    <property type="match status" value="1"/>
</dbReference>
<comment type="function">
    <text evidence="1">Plays a major role in protein secretion by helping the post-translocational extracellular folding of several secreted proteins.</text>
</comment>
<comment type="catalytic activity">
    <reaction evidence="1">
        <text>[protein]-peptidylproline (omega=180) = [protein]-peptidylproline (omega=0)</text>
        <dbReference type="Rhea" id="RHEA:16237"/>
        <dbReference type="Rhea" id="RHEA-COMP:10747"/>
        <dbReference type="Rhea" id="RHEA-COMP:10748"/>
        <dbReference type="ChEBI" id="CHEBI:83833"/>
        <dbReference type="ChEBI" id="CHEBI:83834"/>
        <dbReference type="EC" id="5.2.1.8"/>
    </reaction>
</comment>
<comment type="subcellular location">
    <subcellularLocation>
        <location evidence="1">Cell membrane</location>
        <topology evidence="1">Lipid-anchor</topology>
    </subcellularLocation>
</comment>
<comment type="similarity">
    <text evidence="1">Belongs to the PrsA family.</text>
</comment>
<protein>
    <recommendedName>
        <fullName evidence="1">Foldase protein PrsA</fullName>
        <ecNumber evidence="1">5.2.1.8</ecNumber>
    </recommendedName>
</protein>
<reference key="1">
    <citation type="journal article" date="2002" name="Proc. Natl. Acad. Sci. U.S.A.">
        <title>Complete genome sequence of Clostridium perfringens, an anaerobic flesh-eater.</title>
        <authorList>
            <person name="Shimizu T."/>
            <person name="Ohtani K."/>
            <person name="Hirakawa H."/>
            <person name="Ohshima K."/>
            <person name="Yamashita A."/>
            <person name="Shiba T."/>
            <person name="Ogasawara N."/>
            <person name="Hattori M."/>
            <person name="Kuhara S."/>
            <person name="Hayashi H."/>
        </authorList>
    </citation>
    <scope>NUCLEOTIDE SEQUENCE [LARGE SCALE GENOMIC DNA]</scope>
    <source>
        <strain>13 / Type A</strain>
    </source>
</reference>
<organism>
    <name type="scientific">Clostridium perfringens (strain 13 / Type A)</name>
    <dbReference type="NCBI Taxonomy" id="195102"/>
    <lineage>
        <taxon>Bacteria</taxon>
        <taxon>Bacillati</taxon>
        <taxon>Bacillota</taxon>
        <taxon>Clostridia</taxon>
        <taxon>Eubacteriales</taxon>
        <taxon>Clostridiaceae</taxon>
        <taxon>Clostridium</taxon>
    </lineage>
</organism>
<accession>Q8XHK0</accession>
<keyword id="KW-1003">Cell membrane</keyword>
<keyword id="KW-0413">Isomerase</keyword>
<keyword id="KW-0449">Lipoprotein</keyword>
<keyword id="KW-0472">Membrane</keyword>
<keyword id="KW-0564">Palmitate</keyword>
<keyword id="KW-1185">Reference proteome</keyword>
<keyword id="KW-0697">Rotamase</keyword>
<keyword id="KW-0732">Signal</keyword>
<gene>
    <name evidence="1" type="primary">prsA</name>
    <name type="ordered locus">CPE2483</name>
</gene>
<name>PRSA_CLOPE</name>